<sequence>MAGHSKWANIKHKKAAADAKRGKIWTRLIKEITVAAKLGGGDPDSNPRLRLSMDKAMDANMPKDNIQRAIQRGVGGLEGVNYEEIRYEGYGLSGAAIIVDCLTDNRTRTVAEVRHAFSKHGGNMGTEGSVAFMFTHCGQFLFAPGTPEDKLMDAALEAGADDVVTNDDGSIEVTCPPNDFSAVKAALEGAGFKAEVADVVMKPQNEVSFSGDDAAKMQKLLDALENLDDVQEVFTNAVIED</sequence>
<accession>B3R3E4</accession>
<protein>
    <recommendedName>
        <fullName evidence="1">Probable transcriptional regulatory protein RALTA_A0859</fullName>
    </recommendedName>
</protein>
<keyword id="KW-0963">Cytoplasm</keyword>
<keyword id="KW-0238">DNA-binding</keyword>
<keyword id="KW-0804">Transcription</keyword>
<keyword id="KW-0805">Transcription regulation</keyword>
<comment type="subcellular location">
    <subcellularLocation>
        <location evidence="1">Cytoplasm</location>
    </subcellularLocation>
</comment>
<comment type="similarity">
    <text evidence="1">Belongs to the TACO1 family.</text>
</comment>
<gene>
    <name type="ordered locus">RALTA_A0859</name>
</gene>
<reference key="1">
    <citation type="journal article" date="2008" name="Genome Res.">
        <title>Genome sequence of the beta-rhizobium Cupriavidus taiwanensis and comparative genomics of rhizobia.</title>
        <authorList>
            <person name="Amadou C."/>
            <person name="Pascal G."/>
            <person name="Mangenot S."/>
            <person name="Glew M."/>
            <person name="Bontemps C."/>
            <person name="Capela D."/>
            <person name="Carrere S."/>
            <person name="Cruveiller S."/>
            <person name="Dossat C."/>
            <person name="Lajus A."/>
            <person name="Marchetti M."/>
            <person name="Poinsot V."/>
            <person name="Rouy Z."/>
            <person name="Servin B."/>
            <person name="Saad M."/>
            <person name="Schenowitz C."/>
            <person name="Barbe V."/>
            <person name="Batut J."/>
            <person name="Medigue C."/>
            <person name="Masson-Boivin C."/>
        </authorList>
    </citation>
    <scope>NUCLEOTIDE SEQUENCE [LARGE SCALE GENOMIC DNA]</scope>
    <source>
        <strain>DSM 17343 / BCRC 17206 / CCUG 44338 / CIP 107171 / LMG 19424 / R1</strain>
    </source>
</reference>
<dbReference type="EMBL" id="CU633749">
    <property type="protein sequence ID" value="CAQ68826.1"/>
    <property type="molecule type" value="Genomic_DNA"/>
</dbReference>
<dbReference type="RefSeq" id="WP_012352162.1">
    <property type="nucleotide sequence ID" value="NC_010528.1"/>
</dbReference>
<dbReference type="SMR" id="B3R3E4"/>
<dbReference type="GeneID" id="29761027"/>
<dbReference type="KEGG" id="cti:RALTA_A0859"/>
<dbReference type="eggNOG" id="COG0217">
    <property type="taxonomic scope" value="Bacteria"/>
</dbReference>
<dbReference type="HOGENOM" id="CLU_062974_2_2_4"/>
<dbReference type="BioCyc" id="CTAI977880:RALTA_RS04080-MONOMER"/>
<dbReference type="Proteomes" id="UP000001692">
    <property type="component" value="Chromosome 1"/>
</dbReference>
<dbReference type="GO" id="GO:0005829">
    <property type="term" value="C:cytosol"/>
    <property type="evidence" value="ECO:0007669"/>
    <property type="project" value="TreeGrafter"/>
</dbReference>
<dbReference type="GO" id="GO:0003677">
    <property type="term" value="F:DNA binding"/>
    <property type="evidence" value="ECO:0007669"/>
    <property type="project" value="UniProtKB-UniRule"/>
</dbReference>
<dbReference type="GO" id="GO:0006355">
    <property type="term" value="P:regulation of DNA-templated transcription"/>
    <property type="evidence" value="ECO:0007669"/>
    <property type="project" value="UniProtKB-UniRule"/>
</dbReference>
<dbReference type="FunFam" id="1.10.10.200:FF:000001">
    <property type="entry name" value="Probable transcriptional regulatory protein YebC"/>
    <property type="match status" value="1"/>
</dbReference>
<dbReference type="FunFam" id="3.30.70.980:FF:000002">
    <property type="entry name" value="Probable transcriptional regulatory protein YebC"/>
    <property type="match status" value="1"/>
</dbReference>
<dbReference type="Gene3D" id="1.10.10.200">
    <property type="match status" value="1"/>
</dbReference>
<dbReference type="Gene3D" id="3.30.70.980">
    <property type="match status" value="2"/>
</dbReference>
<dbReference type="HAMAP" id="MF_00693">
    <property type="entry name" value="Transcrip_reg_TACO1"/>
    <property type="match status" value="1"/>
</dbReference>
<dbReference type="InterPro" id="IPR017856">
    <property type="entry name" value="Integrase-like_N"/>
</dbReference>
<dbReference type="InterPro" id="IPR048300">
    <property type="entry name" value="TACO1_YebC-like_2nd/3rd_dom"/>
</dbReference>
<dbReference type="InterPro" id="IPR049083">
    <property type="entry name" value="TACO1_YebC_N"/>
</dbReference>
<dbReference type="InterPro" id="IPR002876">
    <property type="entry name" value="Transcrip_reg_TACO1-like"/>
</dbReference>
<dbReference type="InterPro" id="IPR026564">
    <property type="entry name" value="Transcrip_reg_TACO1-like_dom3"/>
</dbReference>
<dbReference type="InterPro" id="IPR029072">
    <property type="entry name" value="YebC-like"/>
</dbReference>
<dbReference type="NCBIfam" id="NF001030">
    <property type="entry name" value="PRK00110.1"/>
    <property type="match status" value="1"/>
</dbReference>
<dbReference type="NCBIfam" id="NF009044">
    <property type="entry name" value="PRK12378.1"/>
    <property type="match status" value="1"/>
</dbReference>
<dbReference type="NCBIfam" id="TIGR01033">
    <property type="entry name" value="YebC/PmpR family DNA-binding transcriptional regulator"/>
    <property type="match status" value="1"/>
</dbReference>
<dbReference type="PANTHER" id="PTHR12532:SF6">
    <property type="entry name" value="TRANSCRIPTIONAL REGULATORY PROTEIN YEBC-RELATED"/>
    <property type="match status" value="1"/>
</dbReference>
<dbReference type="PANTHER" id="PTHR12532">
    <property type="entry name" value="TRANSLATIONAL ACTIVATOR OF CYTOCHROME C OXIDASE 1"/>
    <property type="match status" value="1"/>
</dbReference>
<dbReference type="Pfam" id="PF20772">
    <property type="entry name" value="TACO1_YebC_N"/>
    <property type="match status" value="1"/>
</dbReference>
<dbReference type="Pfam" id="PF01709">
    <property type="entry name" value="Transcrip_reg"/>
    <property type="match status" value="1"/>
</dbReference>
<dbReference type="SUPFAM" id="SSF75625">
    <property type="entry name" value="YebC-like"/>
    <property type="match status" value="1"/>
</dbReference>
<feature type="chain" id="PRO_1000132182" description="Probable transcriptional regulatory protein RALTA_A0859">
    <location>
        <begin position="1"/>
        <end position="241"/>
    </location>
</feature>
<name>Y859_CUPTR</name>
<organism>
    <name type="scientific">Cupriavidus taiwanensis (strain DSM 17343 / BCRC 17206 / CCUG 44338 / CIP 107171 / LMG 19424 / R1)</name>
    <name type="common">Ralstonia taiwanensis (strain LMG 19424)</name>
    <dbReference type="NCBI Taxonomy" id="977880"/>
    <lineage>
        <taxon>Bacteria</taxon>
        <taxon>Pseudomonadati</taxon>
        <taxon>Pseudomonadota</taxon>
        <taxon>Betaproteobacteria</taxon>
        <taxon>Burkholderiales</taxon>
        <taxon>Burkholderiaceae</taxon>
        <taxon>Cupriavidus</taxon>
    </lineage>
</organism>
<proteinExistence type="inferred from homology"/>
<evidence type="ECO:0000255" key="1">
    <source>
        <dbReference type="HAMAP-Rule" id="MF_00693"/>
    </source>
</evidence>